<name>NFI_GLOVI</name>
<sequence length="246" mass="26549">MSVPNEPDSSLAMHSWNLTPQQAIEVQKQLAVQTVRTGNPEGVQRVAGVDVSFNPREPKALVHAVVVVLSYPGLEVVDRQAVSAAVDFPYIPGLLSFREAPPILAAIGQLSQKPDLVIVDGHGYAHPRRLGIASHLGLFLDLPTIGCAKSILVGRADGDLAEAAGSLTDLLWRGEVVGRAVRTRSRVQPVYVSPGHRLGLDSAVEWVLRCCRGYRLPEPTRQAHNYSNLVRKARQPISLNGLSGAK</sequence>
<feature type="chain" id="PRO_0000159663" description="Endonuclease V">
    <location>
        <begin position="1"/>
        <end position="246"/>
    </location>
</feature>
<feature type="binding site" evidence="1">
    <location>
        <position position="50"/>
    </location>
    <ligand>
        <name>Mg(2+)</name>
        <dbReference type="ChEBI" id="CHEBI:18420"/>
    </ligand>
</feature>
<feature type="binding site" evidence="1">
    <location>
        <position position="120"/>
    </location>
    <ligand>
        <name>Mg(2+)</name>
        <dbReference type="ChEBI" id="CHEBI:18420"/>
    </ligand>
</feature>
<feature type="site" description="Interaction with target DNA" evidence="1">
    <location>
        <position position="90"/>
    </location>
</feature>
<evidence type="ECO:0000255" key="1">
    <source>
        <dbReference type="HAMAP-Rule" id="MF_00801"/>
    </source>
</evidence>
<keyword id="KW-0963">Cytoplasm</keyword>
<keyword id="KW-0227">DNA damage</keyword>
<keyword id="KW-0234">DNA repair</keyword>
<keyword id="KW-0255">Endonuclease</keyword>
<keyword id="KW-0378">Hydrolase</keyword>
<keyword id="KW-0460">Magnesium</keyword>
<keyword id="KW-0479">Metal-binding</keyword>
<keyword id="KW-0540">Nuclease</keyword>
<keyword id="KW-1185">Reference proteome</keyword>
<proteinExistence type="inferred from homology"/>
<organism>
    <name type="scientific">Gloeobacter violaceus (strain ATCC 29082 / PCC 7421)</name>
    <dbReference type="NCBI Taxonomy" id="251221"/>
    <lineage>
        <taxon>Bacteria</taxon>
        <taxon>Bacillati</taxon>
        <taxon>Cyanobacteriota</taxon>
        <taxon>Cyanophyceae</taxon>
        <taxon>Gloeobacterales</taxon>
        <taxon>Gloeobacteraceae</taxon>
        <taxon>Gloeobacter</taxon>
    </lineage>
</organism>
<accession>Q7NDJ2</accession>
<reference key="1">
    <citation type="journal article" date="2003" name="DNA Res.">
        <title>Complete genome structure of Gloeobacter violaceus PCC 7421, a cyanobacterium that lacks thylakoids.</title>
        <authorList>
            <person name="Nakamura Y."/>
            <person name="Kaneko T."/>
            <person name="Sato S."/>
            <person name="Mimuro M."/>
            <person name="Miyashita H."/>
            <person name="Tsuchiya T."/>
            <person name="Sasamoto S."/>
            <person name="Watanabe A."/>
            <person name="Kawashima K."/>
            <person name="Kishida Y."/>
            <person name="Kiyokawa C."/>
            <person name="Kohara M."/>
            <person name="Matsumoto M."/>
            <person name="Matsuno A."/>
            <person name="Nakazaki N."/>
            <person name="Shimpo S."/>
            <person name="Takeuchi C."/>
            <person name="Yamada M."/>
            <person name="Tabata S."/>
        </authorList>
    </citation>
    <scope>NUCLEOTIDE SEQUENCE [LARGE SCALE GENOMIC DNA]</scope>
    <source>
        <strain>ATCC 29082 / PCC 7421</strain>
    </source>
</reference>
<protein>
    <recommendedName>
        <fullName evidence="1">Endonuclease V</fullName>
        <ecNumber evidence="1">3.1.21.7</ecNumber>
    </recommendedName>
    <alternativeName>
        <fullName evidence="1">Deoxyinosine 3'endonuclease</fullName>
    </alternativeName>
    <alternativeName>
        <fullName evidence="1">Deoxyribonuclease V</fullName>
        <shortName evidence="1">DNase V</shortName>
    </alternativeName>
</protein>
<gene>
    <name evidence="1" type="primary">nfi</name>
    <name type="ordered locus">glr4243</name>
</gene>
<dbReference type="EC" id="3.1.21.7" evidence="1"/>
<dbReference type="EMBL" id="BA000045">
    <property type="protein sequence ID" value="BAC92184.1"/>
    <property type="molecule type" value="Genomic_DNA"/>
</dbReference>
<dbReference type="RefSeq" id="NP_927189.1">
    <property type="nucleotide sequence ID" value="NC_005125.1"/>
</dbReference>
<dbReference type="SMR" id="Q7NDJ2"/>
<dbReference type="STRING" id="251221.gene:10761762"/>
<dbReference type="EnsemblBacteria" id="BAC92184">
    <property type="protein sequence ID" value="BAC92184"/>
    <property type="gene ID" value="BAC92184"/>
</dbReference>
<dbReference type="KEGG" id="gvi:glr4243"/>
<dbReference type="PATRIC" id="fig|251221.4.peg.4273"/>
<dbReference type="eggNOG" id="COG1515">
    <property type="taxonomic scope" value="Bacteria"/>
</dbReference>
<dbReference type="HOGENOM" id="CLU_047631_1_1_3"/>
<dbReference type="InParanoid" id="Q7NDJ2"/>
<dbReference type="OrthoDB" id="9790916at2"/>
<dbReference type="PhylomeDB" id="Q7NDJ2"/>
<dbReference type="Proteomes" id="UP000000557">
    <property type="component" value="Chromosome"/>
</dbReference>
<dbReference type="GO" id="GO:0005737">
    <property type="term" value="C:cytoplasm"/>
    <property type="evidence" value="ECO:0007669"/>
    <property type="project" value="UniProtKB-SubCell"/>
</dbReference>
<dbReference type="GO" id="GO:0043737">
    <property type="term" value="F:deoxyribonuclease V activity"/>
    <property type="evidence" value="ECO:0000318"/>
    <property type="project" value="GO_Central"/>
</dbReference>
<dbReference type="GO" id="GO:0000287">
    <property type="term" value="F:magnesium ion binding"/>
    <property type="evidence" value="ECO:0007669"/>
    <property type="project" value="UniProtKB-UniRule"/>
</dbReference>
<dbReference type="GO" id="GO:0016891">
    <property type="term" value="F:RNA endonuclease activity, producing 5'-phosphomonoesters"/>
    <property type="evidence" value="ECO:0000318"/>
    <property type="project" value="GO_Central"/>
</dbReference>
<dbReference type="GO" id="GO:0003727">
    <property type="term" value="F:single-stranded RNA binding"/>
    <property type="evidence" value="ECO:0000318"/>
    <property type="project" value="GO_Central"/>
</dbReference>
<dbReference type="GO" id="GO:0006281">
    <property type="term" value="P:DNA repair"/>
    <property type="evidence" value="ECO:0007669"/>
    <property type="project" value="UniProtKB-UniRule"/>
</dbReference>
<dbReference type="CDD" id="cd06559">
    <property type="entry name" value="Endonuclease_V"/>
    <property type="match status" value="1"/>
</dbReference>
<dbReference type="FunFam" id="3.30.2170.10:FF:000001">
    <property type="entry name" value="Endonuclease V"/>
    <property type="match status" value="1"/>
</dbReference>
<dbReference type="Gene3D" id="3.30.2170.10">
    <property type="entry name" value="archaeoglobus fulgidus dsm 4304 superfamily"/>
    <property type="match status" value="1"/>
</dbReference>
<dbReference type="HAMAP" id="MF_00801">
    <property type="entry name" value="Endonuclease_5"/>
    <property type="match status" value="1"/>
</dbReference>
<dbReference type="InterPro" id="IPR007581">
    <property type="entry name" value="Endonuclease-V"/>
</dbReference>
<dbReference type="NCBIfam" id="NF008629">
    <property type="entry name" value="PRK11617.1"/>
    <property type="match status" value="1"/>
</dbReference>
<dbReference type="PANTHER" id="PTHR28511">
    <property type="entry name" value="ENDONUCLEASE V"/>
    <property type="match status" value="1"/>
</dbReference>
<dbReference type="PANTHER" id="PTHR28511:SF1">
    <property type="entry name" value="ENDONUCLEASE V"/>
    <property type="match status" value="1"/>
</dbReference>
<dbReference type="Pfam" id="PF04493">
    <property type="entry name" value="Endonuclease_5"/>
    <property type="match status" value="1"/>
</dbReference>
<comment type="function">
    <text evidence="1">DNA repair enzyme involved in the repair of deaminated bases. Selectively cleaves double-stranded DNA at the second phosphodiester bond 3' to a deoxyinosine leaving behind the intact lesion on the nicked DNA.</text>
</comment>
<comment type="catalytic activity">
    <reaction evidence="1">
        <text>Endonucleolytic cleavage at apurinic or apyrimidinic sites to products with a 5'-phosphate.</text>
        <dbReference type="EC" id="3.1.21.7"/>
    </reaction>
</comment>
<comment type="cofactor">
    <cofactor evidence="1">
        <name>Mg(2+)</name>
        <dbReference type="ChEBI" id="CHEBI:18420"/>
    </cofactor>
</comment>
<comment type="subcellular location">
    <subcellularLocation>
        <location evidence="1">Cytoplasm</location>
    </subcellularLocation>
</comment>
<comment type="similarity">
    <text evidence="1">Belongs to the endonuclease V family.</text>
</comment>